<accession>Q1Q833</accession>
<dbReference type="EMBL" id="CP000323">
    <property type="protein sequence ID" value="ABE76170.1"/>
    <property type="molecule type" value="Genomic_DNA"/>
</dbReference>
<dbReference type="SMR" id="Q1Q833"/>
<dbReference type="STRING" id="335284.Pcryo_2393"/>
<dbReference type="KEGG" id="pcr:Pcryo_2393"/>
<dbReference type="eggNOG" id="COG0781">
    <property type="taxonomic scope" value="Bacteria"/>
</dbReference>
<dbReference type="HOGENOM" id="CLU_882419_0_0_6"/>
<dbReference type="Proteomes" id="UP000002425">
    <property type="component" value="Chromosome"/>
</dbReference>
<dbReference type="GO" id="GO:0005829">
    <property type="term" value="C:cytosol"/>
    <property type="evidence" value="ECO:0007669"/>
    <property type="project" value="TreeGrafter"/>
</dbReference>
<dbReference type="GO" id="GO:0003723">
    <property type="term" value="F:RNA binding"/>
    <property type="evidence" value="ECO:0007669"/>
    <property type="project" value="UniProtKB-UniRule"/>
</dbReference>
<dbReference type="GO" id="GO:0006353">
    <property type="term" value="P:DNA-templated transcription termination"/>
    <property type="evidence" value="ECO:0007669"/>
    <property type="project" value="UniProtKB-UniRule"/>
</dbReference>
<dbReference type="GO" id="GO:0031564">
    <property type="term" value="P:transcription antitermination"/>
    <property type="evidence" value="ECO:0007669"/>
    <property type="project" value="UniProtKB-KW"/>
</dbReference>
<dbReference type="Gene3D" id="1.10.940.10">
    <property type="entry name" value="NusB-like"/>
    <property type="match status" value="1"/>
</dbReference>
<dbReference type="HAMAP" id="MF_00073">
    <property type="entry name" value="NusB"/>
    <property type="match status" value="1"/>
</dbReference>
<dbReference type="InterPro" id="IPR035926">
    <property type="entry name" value="NusB-like_sf"/>
</dbReference>
<dbReference type="InterPro" id="IPR011605">
    <property type="entry name" value="NusB_fam"/>
</dbReference>
<dbReference type="InterPro" id="IPR006027">
    <property type="entry name" value="NusB_RsmB_TIM44"/>
</dbReference>
<dbReference type="NCBIfam" id="TIGR01951">
    <property type="entry name" value="nusB"/>
    <property type="match status" value="1"/>
</dbReference>
<dbReference type="PANTHER" id="PTHR11078:SF3">
    <property type="entry name" value="ANTITERMINATION NUSB DOMAIN-CONTAINING PROTEIN"/>
    <property type="match status" value="1"/>
</dbReference>
<dbReference type="PANTHER" id="PTHR11078">
    <property type="entry name" value="N UTILIZATION SUBSTANCE PROTEIN B-RELATED"/>
    <property type="match status" value="1"/>
</dbReference>
<dbReference type="Pfam" id="PF01029">
    <property type="entry name" value="NusB"/>
    <property type="match status" value="1"/>
</dbReference>
<dbReference type="SUPFAM" id="SSF48013">
    <property type="entry name" value="NusB-like"/>
    <property type="match status" value="1"/>
</dbReference>
<protein>
    <recommendedName>
        <fullName evidence="1">Transcription antitermination protein NusB</fullName>
    </recommendedName>
    <alternativeName>
        <fullName evidence="1">Antitermination factor NusB</fullName>
    </alternativeName>
</protein>
<organism>
    <name type="scientific">Psychrobacter cryohalolentis (strain ATCC BAA-1226 / DSM 17306 / VKM B-2378 / K5)</name>
    <dbReference type="NCBI Taxonomy" id="335284"/>
    <lineage>
        <taxon>Bacteria</taxon>
        <taxon>Pseudomonadati</taxon>
        <taxon>Pseudomonadota</taxon>
        <taxon>Gammaproteobacteria</taxon>
        <taxon>Moraxellales</taxon>
        <taxon>Moraxellaceae</taxon>
        <taxon>Psychrobacter</taxon>
    </lineage>
</organism>
<keyword id="KW-0694">RNA-binding</keyword>
<keyword id="KW-0804">Transcription</keyword>
<keyword id="KW-0889">Transcription antitermination</keyword>
<keyword id="KW-0805">Transcription regulation</keyword>
<name>NUSB_PSYCK</name>
<gene>
    <name evidence="1" type="primary">nusB</name>
    <name type="ordered locus">Pcryo_2393</name>
</gene>
<sequence length="315" mass="35002">MSESSYKTSHTAIRKARRFAMQGLYEWLVTDRRFDIDGKLGWKANAPHDIAARTRATNAMHTVHIGYYHEMMRDIPEQIDALDALISQHLDREINKLDTVEHAILLVGAYELQNRLEIPYKVVLDEAMKLNNHFGATDAHKLINAVLDRMAVELRAPEVDADSKANLRTSQKAAAKPVTKADKKTDINANNSDIEEKPIASNKPRISANNASVKRNSVSKALANITDYKASKQNDTQNTVEEIIIKPTSIETVIVDKVDEIAVSAENIANDQPVEENIAASNDKVTAEVELLDSNSANFDTKSAELNDADEKSQD</sequence>
<reference key="1">
    <citation type="submission" date="2006-03" db="EMBL/GenBank/DDBJ databases">
        <title>Complete sequence of chromosome of Psychrobacter cryohalolentis K5.</title>
        <authorList>
            <consortium name="US DOE Joint Genome Institute"/>
            <person name="Copeland A."/>
            <person name="Lucas S."/>
            <person name="Lapidus A."/>
            <person name="Barry K."/>
            <person name="Detter J.C."/>
            <person name="Glavina T."/>
            <person name="Hammon N."/>
            <person name="Israni S."/>
            <person name="Dalin E."/>
            <person name="Tice H."/>
            <person name="Pitluck S."/>
            <person name="Brettin T."/>
            <person name="Bruce D."/>
            <person name="Han C."/>
            <person name="Tapia R."/>
            <person name="Sims D.R."/>
            <person name="Gilna P."/>
            <person name="Schmutz J."/>
            <person name="Larimer F."/>
            <person name="Land M."/>
            <person name="Hauser L."/>
            <person name="Kyrpides N."/>
            <person name="Kim E."/>
            <person name="Richardson P."/>
        </authorList>
    </citation>
    <scope>NUCLEOTIDE SEQUENCE [LARGE SCALE GENOMIC DNA]</scope>
    <source>
        <strain>ATCC BAA-1226 / DSM 17306 / VKM B-2378 / K5</strain>
    </source>
</reference>
<proteinExistence type="inferred from homology"/>
<comment type="function">
    <text evidence="1">Involved in transcription antitermination. Required for transcription of ribosomal RNA (rRNA) genes. Binds specifically to the boxA antiterminator sequence of the ribosomal RNA (rrn) operons.</text>
</comment>
<comment type="similarity">
    <text evidence="1">Belongs to the NusB family.</text>
</comment>
<feature type="chain" id="PRO_0000265568" description="Transcription antitermination protein NusB">
    <location>
        <begin position="1"/>
        <end position="315"/>
    </location>
</feature>
<feature type="region of interest" description="Disordered" evidence="2">
    <location>
        <begin position="296"/>
        <end position="315"/>
    </location>
</feature>
<feature type="compositionally biased region" description="Basic and acidic residues" evidence="2">
    <location>
        <begin position="302"/>
        <end position="315"/>
    </location>
</feature>
<evidence type="ECO:0000255" key="1">
    <source>
        <dbReference type="HAMAP-Rule" id="MF_00073"/>
    </source>
</evidence>
<evidence type="ECO:0000256" key="2">
    <source>
        <dbReference type="SAM" id="MobiDB-lite"/>
    </source>
</evidence>